<organism>
    <name type="scientific">Actinobacillus pleuropneumoniae serotype 7 (strain AP76)</name>
    <dbReference type="NCBI Taxonomy" id="537457"/>
    <lineage>
        <taxon>Bacteria</taxon>
        <taxon>Pseudomonadati</taxon>
        <taxon>Pseudomonadota</taxon>
        <taxon>Gammaproteobacteria</taxon>
        <taxon>Pasteurellales</taxon>
        <taxon>Pasteurellaceae</taxon>
        <taxon>Actinobacillus</taxon>
    </lineage>
</organism>
<gene>
    <name evidence="1" type="primary">accD</name>
    <name type="ordered locus">APP7_0676</name>
</gene>
<keyword id="KW-0067">ATP-binding</keyword>
<keyword id="KW-0963">Cytoplasm</keyword>
<keyword id="KW-0275">Fatty acid biosynthesis</keyword>
<keyword id="KW-0276">Fatty acid metabolism</keyword>
<keyword id="KW-0444">Lipid biosynthesis</keyword>
<keyword id="KW-0443">Lipid metabolism</keyword>
<keyword id="KW-0479">Metal-binding</keyword>
<keyword id="KW-0547">Nucleotide-binding</keyword>
<keyword id="KW-0808">Transferase</keyword>
<keyword id="KW-0862">Zinc</keyword>
<keyword id="KW-0863">Zinc-finger</keyword>
<protein>
    <recommendedName>
        <fullName evidence="1">Acetyl-coenzyme A carboxylase carboxyl transferase subunit beta</fullName>
        <shortName evidence="1">ACCase subunit beta</shortName>
        <shortName evidence="1">Acetyl-CoA carboxylase carboxyltransferase subunit beta</shortName>
        <ecNumber evidence="1">2.1.3.15</ecNumber>
    </recommendedName>
</protein>
<sequence>MSWIERILGRTSSSSSSSKSKVPEGVWTKCTSCEQVLYSEELKRNMHVCPKCNHHMRFDARTRLLSLLDQDSAQEIAAELEPQDVLKFKDLKKYKDRLTAAQKQTGEKDSFITMYGTLHNMPVVVASFNFEFMGGSMGSVVGAKFVRAAERALADNIPFICFSASGGARMQEALFSLMQMAKTSAILAKMREKGVPFISVLTDPTLGGVSASLAMLGDINIAEPKALIGFAGPRVIEQTVREKLPEGFQRAEFLLEHGAIDMIVQRKDMRDTLARLCAKMTNKPTPFKTAELIVEEA</sequence>
<name>ACCD_ACTP7</name>
<accession>B3H159</accession>
<comment type="function">
    <text evidence="1">Component of the acetyl coenzyme A carboxylase (ACC) complex. Biotin carboxylase (BC) catalyzes the carboxylation of biotin on its carrier protein (BCCP) and then the CO(2) group is transferred by the transcarboxylase to acetyl-CoA to form malonyl-CoA.</text>
</comment>
<comment type="catalytic activity">
    <reaction evidence="1">
        <text>N(6)-carboxybiotinyl-L-lysyl-[protein] + acetyl-CoA = N(6)-biotinyl-L-lysyl-[protein] + malonyl-CoA</text>
        <dbReference type="Rhea" id="RHEA:54728"/>
        <dbReference type="Rhea" id="RHEA-COMP:10505"/>
        <dbReference type="Rhea" id="RHEA-COMP:10506"/>
        <dbReference type="ChEBI" id="CHEBI:57288"/>
        <dbReference type="ChEBI" id="CHEBI:57384"/>
        <dbReference type="ChEBI" id="CHEBI:83144"/>
        <dbReference type="ChEBI" id="CHEBI:83145"/>
        <dbReference type="EC" id="2.1.3.15"/>
    </reaction>
</comment>
<comment type="cofactor">
    <cofactor evidence="1">
        <name>Zn(2+)</name>
        <dbReference type="ChEBI" id="CHEBI:29105"/>
    </cofactor>
    <text evidence="1">Binds 1 zinc ion per subunit.</text>
</comment>
<comment type="pathway">
    <text evidence="1">Lipid metabolism; malonyl-CoA biosynthesis; malonyl-CoA from acetyl-CoA: step 1/1.</text>
</comment>
<comment type="subunit">
    <text evidence="1">Acetyl-CoA carboxylase is a heterohexamer composed of biotin carboxyl carrier protein (AccB), biotin carboxylase (AccC) and two subunits each of ACCase subunit alpha (AccA) and ACCase subunit beta (AccD).</text>
</comment>
<comment type="subcellular location">
    <subcellularLocation>
        <location evidence="1">Cytoplasm</location>
    </subcellularLocation>
</comment>
<comment type="similarity">
    <text evidence="1">Belongs to the AccD/PCCB family.</text>
</comment>
<proteinExistence type="inferred from homology"/>
<dbReference type="EC" id="2.1.3.15" evidence="1"/>
<dbReference type="EMBL" id="CP001091">
    <property type="protein sequence ID" value="ACE61328.1"/>
    <property type="molecule type" value="Genomic_DNA"/>
</dbReference>
<dbReference type="RefSeq" id="WP_005604033.1">
    <property type="nucleotide sequence ID" value="NC_010939.1"/>
</dbReference>
<dbReference type="SMR" id="B3H159"/>
<dbReference type="KEGG" id="apa:APP7_0676"/>
<dbReference type="HOGENOM" id="CLU_015486_1_0_6"/>
<dbReference type="UniPathway" id="UPA00655">
    <property type="reaction ID" value="UER00711"/>
</dbReference>
<dbReference type="Proteomes" id="UP000001226">
    <property type="component" value="Chromosome"/>
</dbReference>
<dbReference type="GO" id="GO:0009329">
    <property type="term" value="C:acetate CoA-transferase complex"/>
    <property type="evidence" value="ECO:0007669"/>
    <property type="project" value="TreeGrafter"/>
</dbReference>
<dbReference type="GO" id="GO:0003989">
    <property type="term" value="F:acetyl-CoA carboxylase activity"/>
    <property type="evidence" value="ECO:0007669"/>
    <property type="project" value="InterPro"/>
</dbReference>
<dbReference type="GO" id="GO:0005524">
    <property type="term" value="F:ATP binding"/>
    <property type="evidence" value="ECO:0007669"/>
    <property type="project" value="UniProtKB-KW"/>
</dbReference>
<dbReference type="GO" id="GO:0016743">
    <property type="term" value="F:carboxyl- or carbamoyltransferase activity"/>
    <property type="evidence" value="ECO:0007669"/>
    <property type="project" value="UniProtKB-UniRule"/>
</dbReference>
<dbReference type="GO" id="GO:0008270">
    <property type="term" value="F:zinc ion binding"/>
    <property type="evidence" value="ECO:0007669"/>
    <property type="project" value="UniProtKB-UniRule"/>
</dbReference>
<dbReference type="GO" id="GO:0006633">
    <property type="term" value="P:fatty acid biosynthetic process"/>
    <property type="evidence" value="ECO:0007669"/>
    <property type="project" value="UniProtKB-KW"/>
</dbReference>
<dbReference type="GO" id="GO:2001295">
    <property type="term" value="P:malonyl-CoA biosynthetic process"/>
    <property type="evidence" value="ECO:0007669"/>
    <property type="project" value="UniProtKB-UniRule"/>
</dbReference>
<dbReference type="Gene3D" id="3.90.226.10">
    <property type="entry name" value="2-enoyl-CoA Hydratase, Chain A, domain 1"/>
    <property type="match status" value="1"/>
</dbReference>
<dbReference type="HAMAP" id="MF_01395">
    <property type="entry name" value="AcetylCoA_CT_beta"/>
    <property type="match status" value="1"/>
</dbReference>
<dbReference type="InterPro" id="IPR034733">
    <property type="entry name" value="AcCoA_carboxyl_beta"/>
</dbReference>
<dbReference type="InterPro" id="IPR000438">
    <property type="entry name" value="Acetyl_CoA_COase_Trfase_b_su"/>
</dbReference>
<dbReference type="InterPro" id="IPR029045">
    <property type="entry name" value="ClpP/crotonase-like_dom_sf"/>
</dbReference>
<dbReference type="InterPro" id="IPR011762">
    <property type="entry name" value="COA_CT_N"/>
</dbReference>
<dbReference type="InterPro" id="IPR041010">
    <property type="entry name" value="Znf-ACC"/>
</dbReference>
<dbReference type="NCBIfam" id="TIGR00515">
    <property type="entry name" value="accD"/>
    <property type="match status" value="1"/>
</dbReference>
<dbReference type="PANTHER" id="PTHR42995">
    <property type="entry name" value="ACETYL-COENZYME A CARBOXYLASE CARBOXYL TRANSFERASE SUBUNIT BETA, CHLOROPLASTIC"/>
    <property type="match status" value="1"/>
</dbReference>
<dbReference type="PANTHER" id="PTHR42995:SF5">
    <property type="entry name" value="ACETYL-COENZYME A CARBOXYLASE CARBOXYL TRANSFERASE SUBUNIT BETA, CHLOROPLASTIC"/>
    <property type="match status" value="1"/>
</dbReference>
<dbReference type="Pfam" id="PF01039">
    <property type="entry name" value="Carboxyl_trans"/>
    <property type="match status" value="1"/>
</dbReference>
<dbReference type="Pfam" id="PF17848">
    <property type="entry name" value="Zn_ribbon_ACC"/>
    <property type="match status" value="1"/>
</dbReference>
<dbReference type="PRINTS" id="PR01070">
    <property type="entry name" value="ACCCTRFRASEB"/>
</dbReference>
<dbReference type="SUPFAM" id="SSF52096">
    <property type="entry name" value="ClpP/crotonase"/>
    <property type="match status" value="1"/>
</dbReference>
<dbReference type="PROSITE" id="PS50980">
    <property type="entry name" value="COA_CT_NTER"/>
    <property type="match status" value="1"/>
</dbReference>
<feature type="chain" id="PRO_0000358946" description="Acetyl-coenzyme A carboxylase carboxyl transferase subunit beta">
    <location>
        <begin position="1"/>
        <end position="297"/>
    </location>
</feature>
<feature type="domain" description="CoA carboxyltransferase N-terminal" evidence="2">
    <location>
        <begin position="26"/>
        <end position="295"/>
    </location>
</feature>
<feature type="zinc finger region" description="C4-type" evidence="1">
    <location>
        <begin position="30"/>
        <end position="52"/>
    </location>
</feature>
<feature type="region of interest" description="Disordered" evidence="3">
    <location>
        <begin position="1"/>
        <end position="23"/>
    </location>
</feature>
<feature type="binding site" evidence="1">
    <location>
        <position position="30"/>
    </location>
    <ligand>
        <name>Zn(2+)</name>
        <dbReference type="ChEBI" id="CHEBI:29105"/>
    </ligand>
</feature>
<feature type="binding site" evidence="1">
    <location>
        <position position="33"/>
    </location>
    <ligand>
        <name>Zn(2+)</name>
        <dbReference type="ChEBI" id="CHEBI:29105"/>
    </ligand>
</feature>
<feature type="binding site" evidence="1">
    <location>
        <position position="49"/>
    </location>
    <ligand>
        <name>Zn(2+)</name>
        <dbReference type="ChEBI" id="CHEBI:29105"/>
    </ligand>
</feature>
<feature type="binding site" evidence="1">
    <location>
        <position position="52"/>
    </location>
    <ligand>
        <name>Zn(2+)</name>
        <dbReference type="ChEBI" id="CHEBI:29105"/>
    </ligand>
</feature>
<reference key="1">
    <citation type="submission" date="2008-06" db="EMBL/GenBank/DDBJ databases">
        <title>Genome and proteome analysis of A. pleuropneumoniae serotype 7.</title>
        <authorList>
            <person name="Linke B."/>
            <person name="Buettner F."/>
            <person name="Martinez-Arias R."/>
            <person name="Goesmann A."/>
            <person name="Baltes N."/>
            <person name="Tegetmeyer H."/>
            <person name="Singh M."/>
            <person name="Gerlach G.F."/>
        </authorList>
    </citation>
    <scope>NUCLEOTIDE SEQUENCE [LARGE SCALE GENOMIC DNA]</scope>
    <source>
        <strain>AP76</strain>
    </source>
</reference>
<evidence type="ECO:0000255" key="1">
    <source>
        <dbReference type="HAMAP-Rule" id="MF_01395"/>
    </source>
</evidence>
<evidence type="ECO:0000255" key="2">
    <source>
        <dbReference type="PROSITE-ProRule" id="PRU01136"/>
    </source>
</evidence>
<evidence type="ECO:0000256" key="3">
    <source>
        <dbReference type="SAM" id="MobiDB-lite"/>
    </source>
</evidence>